<organismHost>
    <name type="scientific">Equus caballus</name>
    <name type="common">Horse</name>
    <dbReference type="NCBI Taxonomy" id="9796"/>
</organismHost>
<name>VGE6_EHV2</name>
<organism>
    <name type="scientific">Equine herpesvirus 2 (strain 86/87)</name>
    <name type="common">EHV-2</name>
    <dbReference type="NCBI Taxonomy" id="82831"/>
    <lineage>
        <taxon>Viruses</taxon>
        <taxon>Duplodnaviria</taxon>
        <taxon>Heunggongvirae</taxon>
        <taxon>Peploviricota</taxon>
        <taxon>Herviviricetes</taxon>
        <taxon>Herpesvirales</taxon>
        <taxon>Orthoherpesviridae</taxon>
        <taxon>Gammaherpesvirinae</taxon>
        <taxon>Percavirus</taxon>
        <taxon>Percavirus equidgamma2</taxon>
        <taxon>Equid gammaherpesvirus 2</taxon>
    </lineage>
</organism>
<sequence length="325" mass="35795">MEEMRHAGQISRKLLFYFGSDNYNLSINDSMFRNCTLRADRAAALFGTMLEGVFLGIVLTMMGFFSVKTRFTPSSNIWLFAGCVAIALWLMTKMAQDYAPGPLKCIVTENLALFCSLLGGALNVGMCVDRCRAVYSRMARGSMTPAAICTYIFWAVVGSLLVIAVNALEMSRNGLHMSEGLEGGCFQAASPLAHRAKLVAKFLMYLVFVCIVSVGTALTLVKILNTNLNRKRAICVNVVLVTLPNTFIWLTAMTSAWREFSSYKMCPKIVTGNVFIYLSSVPMLVILFVYMFTGKNLKHTLRPQTRSYSSSTGSASCFAHLAGKP</sequence>
<proteinExistence type="inferred from homology"/>
<keyword id="KW-0297">G-protein coupled receptor</keyword>
<keyword id="KW-1043">Host membrane</keyword>
<keyword id="KW-0472">Membrane</keyword>
<keyword id="KW-0675">Receptor</keyword>
<keyword id="KW-1185">Reference proteome</keyword>
<keyword id="KW-0807">Transducer</keyword>
<keyword id="KW-0812">Transmembrane</keyword>
<keyword id="KW-1133">Transmembrane helix</keyword>
<reference key="1">
    <citation type="journal article" date="1995" name="J. Mol. Biol.">
        <title>The DNA sequence of equine herpesvirus 2.</title>
        <authorList>
            <person name="Telford E.A.R."/>
            <person name="Watson M.S."/>
            <person name="Aird H.C."/>
            <person name="Perry J."/>
            <person name="Davison A.J."/>
        </authorList>
    </citation>
    <scope>NUCLEOTIDE SEQUENCE [LARGE SCALE GENOMIC DNA]</scope>
</reference>
<protein>
    <recommendedName>
        <fullName>G-protein coupled receptor E6</fullName>
    </recommendedName>
</protein>
<accession>Q66615</accession>
<dbReference type="EMBL" id="U20824">
    <property type="protein sequence ID" value="AAC13798.1"/>
    <property type="molecule type" value="Genomic_DNA"/>
</dbReference>
<dbReference type="PIR" id="S55605">
    <property type="entry name" value="S55605"/>
</dbReference>
<dbReference type="RefSeq" id="NP_042607.1">
    <property type="nucleotide sequence ID" value="NC_001650.2"/>
</dbReference>
<dbReference type="SMR" id="Q66615"/>
<dbReference type="GeneID" id="1461034"/>
<dbReference type="KEGG" id="vg:1461034"/>
<dbReference type="Proteomes" id="UP000007083">
    <property type="component" value="Segment"/>
</dbReference>
<dbReference type="GO" id="GO:0033644">
    <property type="term" value="C:host cell membrane"/>
    <property type="evidence" value="ECO:0007669"/>
    <property type="project" value="UniProtKB-SubCell"/>
</dbReference>
<dbReference type="GO" id="GO:0016020">
    <property type="term" value="C:membrane"/>
    <property type="evidence" value="ECO:0007669"/>
    <property type="project" value="UniProtKB-KW"/>
</dbReference>
<dbReference type="GO" id="GO:0004930">
    <property type="term" value="F:G protein-coupled receptor activity"/>
    <property type="evidence" value="ECO:0007669"/>
    <property type="project" value="UniProtKB-KW"/>
</dbReference>
<dbReference type="Gene3D" id="1.20.1070.10">
    <property type="entry name" value="Rhodopsin 7-helix transmembrane proteins"/>
    <property type="match status" value="1"/>
</dbReference>
<dbReference type="SUPFAM" id="SSF81321">
    <property type="entry name" value="Family A G protein-coupled receptor-like"/>
    <property type="match status" value="1"/>
</dbReference>
<dbReference type="PROSITE" id="PS00237">
    <property type="entry name" value="G_PROTEIN_RECEP_F1_1"/>
    <property type="match status" value="1"/>
</dbReference>
<gene>
    <name type="primary">E6</name>
</gene>
<comment type="subcellular location">
    <subcellularLocation>
        <location evidence="2">Host membrane</location>
        <topology evidence="2">Multi-pass membrane protein</topology>
    </subcellularLocation>
</comment>
<comment type="similarity">
    <text evidence="2">Belongs to the G-protein coupled receptor 1 family.</text>
</comment>
<feature type="chain" id="PRO_0000405983" description="G-protein coupled receptor E6">
    <location>
        <begin position="1"/>
        <end position="325"/>
    </location>
</feature>
<feature type="transmembrane region" description="Helical" evidence="1">
    <location>
        <begin position="45"/>
        <end position="65"/>
    </location>
</feature>
<feature type="transmembrane region" description="Helical" evidence="1">
    <location>
        <begin position="71"/>
        <end position="91"/>
    </location>
</feature>
<feature type="transmembrane region" description="Helical" evidence="1">
    <location>
        <begin position="106"/>
        <end position="126"/>
    </location>
</feature>
<feature type="transmembrane region" description="Helical" evidence="1">
    <location>
        <begin position="145"/>
        <end position="165"/>
    </location>
</feature>
<feature type="transmembrane region" description="Helical" evidence="1">
    <location>
        <begin position="198"/>
        <end position="218"/>
    </location>
</feature>
<feature type="transmembrane region" description="Helical" evidence="1">
    <location>
        <begin position="233"/>
        <end position="253"/>
    </location>
</feature>
<feature type="transmembrane region" description="Helical" evidence="1">
    <location>
        <begin position="274"/>
        <end position="294"/>
    </location>
</feature>
<evidence type="ECO:0000255" key="1"/>
<evidence type="ECO:0000305" key="2"/>